<protein>
    <recommendedName>
        <fullName>ATP-dependent RNA helicase DBP10</fullName>
        <ecNumber>3.6.4.13</ecNumber>
    </recommendedName>
</protein>
<feature type="chain" id="PRO_0000310246" description="ATP-dependent RNA helicase DBP10">
    <location>
        <begin position="1"/>
        <end position="977"/>
    </location>
</feature>
<feature type="domain" description="Helicase ATP-binding" evidence="2">
    <location>
        <begin position="152"/>
        <end position="324"/>
    </location>
</feature>
<feature type="domain" description="Helicase C-terminal" evidence="3">
    <location>
        <begin position="403"/>
        <end position="554"/>
    </location>
</feature>
<feature type="region of interest" description="Disordered" evidence="4">
    <location>
        <begin position="1"/>
        <end position="121"/>
    </location>
</feature>
<feature type="region of interest" description="Disordered" evidence="4">
    <location>
        <begin position="377"/>
        <end position="403"/>
    </location>
</feature>
<feature type="region of interest" description="Disordered" evidence="4">
    <location>
        <begin position="871"/>
        <end position="977"/>
    </location>
</feature>
<feature type="short sequence motif" description="Q motif">
    <location>
        <begin position="121"/>
        <end position="149"/>
    </location>
</feature>
<feature type="short sequence motif" description="DEAD box">
    <location>
        <begin position="272"/>
        <end position="275"/>
    </location>
</feature>
<feature type="compositionally biased region" description="Polar residues" evidence="4">
    <location>
        <begin position="26"/>
        <end position="35"/>
    </location>
</feature>
<feature type="compositionally biased region" description="Acidic residues" evidence="4">
    <location>
        <begin position="37"/>
        <end position="61"/>
    </location>
</feature>
<feature type="compositionally biased region" description="Polar residues" evidence="4">
    <location>
        <begin position="70"/>
        <end position="81"/>
    </location>
</feature>
<feature type="compositionally biased region" description="Basic residues" evidence="4">
    <location>
        <begin position="394"/>
        <end position="403"/>
    </location>
</feature>
<feature type="compositionally biased region" description="Polar residues" evidence="4">
    <location>
        <begin position="878"/>
        <end position="894"/>
    </location>
</feature>
<feature type="compositionally biased region" description="Basic and acidic residues" evidence="4">
    <location>
        <begin position="910"/>
        <end position="921"/>
    </location>
</feature>
<feature type="compositionally biased region" description="Basic residues" evidence="4">
    <location>
        <begin position="961"/>
        <end position="977"/>
    </location>
</feature>
<feature type="binding site" evidence="2">
    <location>
        <begin position="165"/>
        <end position="172"/>
    </location>
    <ligand>
        <name>ATP</name>
        <dbReference type="ChEBI" id="CHEBI:30616"/>
    </ligand>
</feature>
<dbReference type="EC" id="3.6.4.13"/>
<dbReference type="EMBL" id="DS480389">
    <property type="protein sequence ID" value="EDO18419.1"/>
    <property type="molecule type" value="Genomic_DNA"/>
</dbReference>
<dbReference type="RefSeq" id="XP_001646277.1">
    <property type="nucleotide sequence ID" value="XM_001646227.1"/>
</dbReference>
<dbReference type="SMR" id="A7TGW7"/>
<dbReference type="FunCoup" id="A7TGW7">
    <property type="interactions" value="1150"/>
</dbReference>
<dbReference type="STRING" id="436907.A7TGW7"/>
<dbReference type="GeneID" id="5546706"/>
<dbReference type="KEGG" id="vpo:Kpol_1032p11"/>
<dbReference type="eggNOG" id="KOG0337">
    <property type="taxonomic scope" value="Eukaryota"/>
</dbReference>
<dbReference type="HOGENOM" id="CLU_003041_5_1_1"/>
<dbReference type="InParanoid" id="A7TGW7"/>
<dbReference type="OMA" id="EDQFGMM"/>
<dbReference type="OrthoDB" id="10261375at2759"/>
<dbReference type="PhylomeDB" id="A7TGW7"/>
<dbReference type="Proteomes" id="UP000000267">
    <property type="component" value="Unassembled WGS sequence"/>
</dbReference>
<dbReference type="GO" id="GO:0005829">
    <property type="term" value="C:cytosol"/>
    <property type="evidence" value="ECO:0007669"/>
    <property type="project" value="TreeGrafter"/>
</dbReference>
<dbReference type="GO" id="GO:0005730">
    <property type="term" value="C:nucleolus"/>
    <property type="evidence" value="ECO:0007669"/>
    <property type="project" value="UniProtKB-SubCell"/>
</dbReference>
<dbReference type="GO" id="GO:0030687">
    <property type="term" value="C:preribosome, large subunit precursor"/>
    <property type="evidence" value="ECO:0007669"/>
    <property type="project" value="EnsemblFungi"/>
</dbReference>
<dbReference type="GO" id="GO:0005524">
    <property type="term" value="F:ATP binding"/>
    <property type="evidence" value="ECO:0007669"/>
    <property type="project" value="UniProtKB-KW"/>
</dbReference>
<dbReference type="GO" id="GO:0016887">
    <property type="term" value="F:ATP hydrolysis activity"/>
    <property type="evidence" value="ECO:0007669"/>
    <property type="project" value="RHEA"/>
</dbReference>
<dbReference type="GO" id="GO:0042802">
    <property type="term" value="F:identical protein binding"/>
    <property type="evidence" value="ECO:0007669"/>
    <property type="project" value="EnsemblFungi"/>
</dbReference>
<dbReference type="GO" id="GO:0003723">
    <property type="term" value="F:RNA binding"/>
    <property type="evidence" value="ECO:0007669"/>
    <property type="project" value="UniProtKB-KW"/>
</dbReference>
<dbReference type="GO" id="GO:0003724">
    <property type="term" value="F:RNA helicase activity"/>
    <property type="evidence" value="ECO:0007669"/>
    <property type="project" value="UniProtKB-EC"/>
</dbReference>
<dbReference type="GO" id="GO:1902626">
    <property type="term" value="P:assembly of large subunit precursor of preribosome"/>
    <property type="evidence" value="ECO:0007669"/>
    <property type="project" value="EnsemblFungi"/>
</dbReference>
<dbReference type="GO" id="GO:0000466">
    <property type="term" value="P:maturation of 5.8S rRNA from tricistronic rRNA transcript (SSU-rRNA, 5.8S rRNA, LSU-rRNA)"/>
    <property type="evidence" value="ECO:0007669"/>
    <property type="project" value="EnsemblFungi"/>
</dbReference>
<dbReference type="GO" id="GO:0000463">
    <property type="term" value="P:maturation of LSU-rRNA from tricistronic rRNA transcript (SSU-rRNA, 5.8S rRNA, LSU-rRNA)"/>
    <property type="evidence" value="ECO:0007669"/>
    <property type="project" value="EnsemblFungi"/>
</dbReference>
<dbReference type="CDD" id="cd17959">
    <property type="entry name" value="DEADc_DDX54"/>
    <property type="match status" value="1"/>
</dbReference>
<dbReference type="CDD" id="cd18787">
    <property type="entry name" value="SF2_C_DEAD"/>
    <property type="match status" value="1"/>
</dbReference>
<dbReference type="FunFam" id="3.40.50.300:FF:000865">
    <property type="entry name" value="ATP-dependent RNA helicase DDX54"/>
    <property type="match status" value="1"/>
</dbReference>
<dbReference type="Gene3D" id="3.40.50.300">
    <property type="entry name" value="P-loop containing nucleotide triphosphate hydrolases"/>
    <property type="match status" value="2"/>
</dbReference>
<dbReference type="InterPro" id="IPR012541">
    <property type="entry name" value="DBP10_C"/>
</dbReference>
<dbReference type="InterPro" id="IPR033517">
    <property type="entry name" value="DDX54/DBP10_DEAD-box_helicase"/>
</dbReference>
<dbReference type="InterPro" id="IPR011545">
    <property type="entry name" value="DEAD/DEAH_box_helicase_dom"/>
</dbReference>
<dbReference type="InterPro" id="IPR050079">
    <property type="entry name" value="DEAD_box_RNA_helicase"/>
</dbReference>
<dbReference type="InterPro" id="IPR014001">
    <property type="entry name" value="Helicase_ATP-bd"/>
</dbReference>
<dbReference type="InterPro" id="IPR001650">
    <property type="entry name" value="Helicase_C-like"/>
</dbReference>
<dbReference type="InterPro" id="IPR027417">
    <property type="entry name" value="P-loop_NTPase"/>
</dbReference>
<dbReference type="InterPro" id="IPR000629">
    <property type="entry name" value="RNA-helicase_DEAD-box_CS"/>
</dbReference>
<dbReference type="InterPro" id="IPR014014">
    <property type="entry name" value="RNA_helicase_DEAD_Q_motif"/>
</dbReference>
<dbReference type="PANTHER" id="PTHR47959">
    <property type="entry name" value="ATP-DEPENDENT RNA HELICASE RHLE-RELATED"/>
    <property type="match status" value="1"/>
</dbReference>
<dbReference type="PANTHER" id="PTHR47959:SF8">
    <property type="entry name" value="RNA HELICASE"/>
    <property type="match status" value="1"/>
</dbReference>
<dbReference type="Pfam" id="PF08147">
    <property type="entry name" value="DBP10CT"/>
    <property type="match status" value="1"/>
</dbReference>
<dbReference type="Pfam" id="PF00270">
    <property type="entry name" value="DEAD"/>
    <property type="match status" value="1"/>
</dbReference>
<dbReference type="Pfam" id="PF00271">
    <property type="entry name" value="Helicase_C"/>
    <property type="match status" value="1"/>
</dbReference>
<dbReference type="SMART" id="SM01123">
    <property type="entry name" value="DBP10CT"/>
    <property type="match status" value="1"/>
</dbReference>
<dbReference type="SMART" id="SM00487">
    <property type="entry name" value="DEXDc"/>
    <property type="match status" value="1"/>
</dbReference>
<dbReference type="SMART" id="SM00490">
    <property type="entry name" value="HELICc"/>
    <property type="match status" value="1"/>
</dbReference>
<dbReference type="SUPFAM" id="SSF52540">
    <property type="entry name" value="P-loop containing nucleoside triphosphate hydrolases"/>
    <property type="match status" value="2"/>
</dbReference>
<dbReference type="PROSITE" id="PS00039">
    <property type="entry name" value="DEAD_ATP_HELICASE"/>
    <property type="match status" value="1"/>
</dbReference>
<dbReference type="PROSITE" id="PS51192">
    <property type="entry name" value="HELICASE_ATP_BIND_1"/>
    <property type="match status" value="1"/>
</dbReference>
<dbReference type="PROSITE" id="PS51194">
    <property type="entry name" value="HELICASE_CTER"/>
    <property type="match status" value="1"/>
</dbReference>
<dbReference type="PROSITE" id="PS51195">
    <property type="entry name" value="Q_MOTIF"/>
    <property type="match status" value="1"/>
</dbReference>
<comment type="function">
    <text evidence="1">ATP-binding RNA helicase involved in the biogenesis of 60S ribosomal subunits and is required for the normal formation of 25S and 5.8S rRNAs.</text>
</comment>
<comment type="catalytic activity">
    <reaction>
        <text>ATP + H2O = ADP + phosphate + H(+)</text>
        <dbReference type="Rhea" id="RHEA:13065"/>
        <dbReference type="ChEBI" id="CHEBI:15377"/>
        <dbReference type="ChEBI" id="CHEBI:15378"/>
        <dbReference type="ChEBI" id="CHEBI:30616"/>
        <dbReference type="ChEBI" id="CHEBI:43474"/>
        <dbReference type="ChEBI" id="CHEBI:456216"/>
        <dbReference type="EC" id="3.6.4.13"/>
    </reaction>
</comment>
<comment type="subcellular location">
    <subcellularLocation>
        <location evidence="1">Nucleus</location>
        <location evidence="1">Nucleolus</location>
    </subcellularLocation>
</comment>
<comment type="domain">
    <text>The Q motif is unique to and characteristic of the DEAD box family of RNA helicases and controls ATP binding and hydrolysis.</text>
</comment>
<comment type="similarity">
    <text evidence="5">Belongs to the DEAD box helicase family. DDX54/DBP10 subfamily.</text>
</comment>
<organism>
    <name type="scientific">Vanderwaltozyma polyspora (strain ATCC 22028 / DSM 70294 / BCRC 21397 / CBS 2163 / NBRC 10782 / NRRL Y-8283 / UCD 57-17)</name>
    <name type="common">Kluyveromyces polysporus</name>
    <dbReference type="NCBI Taxonomy" id="436907"/>
    <lineage>
        <taxon>Eukaryota</taxon>
        <taxon>Fungi</taxon>
        <taxon>Dikarya</taxon>
        <taxon>Ascomycota</taxon>
        <taxon>Saccharomycotina</taxon>
        <taxon>Saccharomycetes</taxon>
        <taxon>Saccharomycetales</taxon>
        <taxon>Saccharomycetaceae</taxon>
        <taxon>Vanderwaltozyma</taxon>
    </lineage>
</organism>
<sequence length="977" mass="110240">MGIISKRKRHVEDSNSSSDDDDGFDITSNIGLNTADSSDESESSGDDEEEVQDIVDFSDEEDTKKKPKSSNKTLTDNNSFPSLEISDDEDSNNKGDHEDDDDDLNDYFSINNSEKSKHKKGSFPSFGFSKLILSNVHKKGFRQPTPIQRKTIPLILQKRDIVGMARTGSGKTAAFVLPMIEKLKSHSSKIGARAVILSPSRELALQTHRVFKEFSKGTHLRSVLLTGGDSLEDQFSMMMSNPDVIVATPGRFLHLKVEMSLDLKTVEYVVFDEADRLFEMGFQEQLNELLAALPMNRQTLLFSATLPSSLVDFAKAGLTNPVLVRLDAETKISENLEILFLSTKNEERENNLLYLLQDVIKIPLGTDDQIKKLSDFNKSLSDSDSEDEDNKGKQNSRKSKKGKFQKLKVSASNELPTEKSTIVFAPTRHHVEYITQLLKDSGFLVSYLYGTLDQHARKRQLLNFRAGLTSILVVTDVAARGVDIPMLANVINYSLPASSKIFIHRVGRTARAGNRGWAYSIVSETELPYMLDLELFLGKKILLTSMYEASCKLMKSKWIADGNTESSFEDPKISYTNRLVLGSAPRYDIESVGDLYKNIIESNFDLQMAKKVSLKAEKLYCRTRTAASPESIKRSKEVIASGWDEQNIRFGRNLEKEKLNFLAKFQNRRNKETVFEFGKNPNDDTAILMQKRRKQIAPIQRKARKRQELLDKERVAGLTHKIEDEILKGEDHEAGYSVPEEALKSFEDADKILEEQESSRKKKSKTFRDPNFFISHYAPAGDIQDKQLQITSGFTNDAAQAAYDLNDDDKVQVHKQTATVKWDKKRKKYVNMQGIDNKKYIIGESGQKIPASFKSGKFAEWSKSRNIKGIKTGARETSIPTNLLSDPTTDSGSQRGPGGRFKHKQNKAPRLPDKFRDDYQSQKKKVQSAIERGVSVKGFGGSSGNTELKTTAQIRKERMAKEKKRQKNARPTKKRKF</sequence>
<gene>
    <name type="primary">DBP10</name>
    <name type="ORF">Kpol_1032p11</name>
</gene>
<evidence type="ECO:0000250" key="1"/>
<evidence type="ECO:0000255" key="2">
    <source>
        <dbReference type="PROSITE-ProRule" id="PRU00541"/>
    </source>
</evidence>
<evidence type="ECO:0000255" key="3">
    <source>
        <dbReference type="PROSITE-ProRule" id="PRU00542"/>
    </source>
</evidence>
<evidence type="ECO:0000256" key="4">
    <source>
        <dbReference type="SAM" id="MobiDB-lite"/>
    </source>
</evidence>
<evidence type="ECO:0000305" key="5"/>
<accession>A7TGW7</accession>
<keyword id="KW-0067">ATP-binding</keyword>
<keyword id="KW-0347">Helicase</keyword>
<keyword id="KW-0378">Hydrolase</keyword>
<keyword id="KW-0547">Nucleotide-binding</keyword>
<keyword id="KW-0539">Nucleus</keyword>
<keyword id="KW-1185">Reference proteome</keyword>
<keyword id="KW-0690">Ribosome biogenesis</keyword>
<keyword id="KW-0694">RNA-binding</keyword>
<keyword id="KW-0698">rRNA processing</keyword>
<reference key="1">
    <citation type="journal article" date="2007" name="Proc. Natl. Acad. Sci. U.S.A.">
        <title>Independent sorting-out of thousands of duplicated gene pairs in two yeast species descended from a whole-genome duplication.</title>
        <authorList>
            <person name="Scannell D.R."/>
            <person name="Frank A.C."/>
            <person name="Conant G.C."/>
            <person name="Byrne K.P."/>
            <person name="Woolfit M."/>
            <person name="Wolfe K.H."/>
        </authorList>
    </citation>
    <scope>NUCLEOTIDE SEQUENCE [LARGE SCALE GENOMIC DNA]</scope>
    <source>
        <strain>ATCC 22028 / DSM 70294 / BCRC 21397 / CBS 2163 / NBRC 10782 / NRRL Y-8283 / UCD 57-17</strain>
    </source>
</reference>
<name>DBP10_VANPO</name>
<proteinExistence type="inferred from homology"/>